<protein>
    <recommendedName>
        <fullName evidence="1">tRNA pseudouridine synthase A</fullName>
        <ecNumber evidence="1">5.4.99.12</ecNumber>
    </recommendedName>
    <alternativeName>
        <fullName evidence="1">tRNA pseudouridine(38-40) synthase</fullName>
    </alternativeName>
    <alternativeName>
        <fullName evidence="1">tRNA pseudouridylate synthase I</fullName>
    </alternativeName>
    <alternativeName>
        <fullName evidence="1">tRNA-uridine isomerase I</fullName>
    </alternativeName>
</protein>
<feature type="chain" id="PRO_1000194527" description="tRNA pseudouridine synthase A">
    <location>
        <begin position="1"/>
        <end position="247"/>
    </location>
</feature>
<feature type="active site" description="Nucleophile" evidence="1">
    <location>
        <position position="53"/>
    </location>
</feature>
<feature type="binding site" evidence="1">
    <location>
        <position position="112"/>
    </location>
    <ligand>
        <name>substrate</name>
    </ligand>
</feature>
<accession>B9KIN8</accession>
<name>TRUA_ANAMF</name>
<organism>
    <name type="scientific">Anaplasma marginale (strain Florida)</name>
    <dbReference type="NCBI Taxonomy" id="320483"/>
    <lineage>
        <taxon>Bacteria</taxon>
        <taxon>Pseudomonadati</taxon>
        <taxon>Pseudomonadota</taxon>
        <taxon>Alphaproteobacteria</taxon>
        <taxon>Rickettsiales</taxon>
        <taxon>Anaplasmataceae</taxon>
        <taxon>Anaplasma</taxon>
    </lineage>
</organism>
<proteinExistence type="inferred from homology"/>
<gene>
    <name evidence="1" type="primary">truA</name>
    <name type="ordered locus">AMF_494</name>
</gene>
<keyword id="KW-0413">Isomerase</keyword>
<keyword id="KW-1185">Reference proteome</keyword>
<keyword id="KW-0819">tRNA processing</keyword>
<dbReference type="EC" id="5.4.99.12" evidence="1"/>
<dbReference type="EMBL" id="CP001079">
    <property type="protein sequence ID" value="ACM49350.1"/>
    <property type="molecule type" value="Genomic_DNA"/>
</dbReference>
<dbReference type="RefSeq" id="WP_010264637.1">
    <property type="nucleotide sequence ID" value="NC_012026.1"/>
</dbReference>
<dbReference type="SMR" id="B9KIN8"/>
<dbReference type="STRING" id="320483.AMF_494"/>
<dbReference type="GeneID" id="7398114"/>
<dbReference type="KEGG" id="amf:AMF_494"/>
<dbReference type="PATRIC" id="fig|320483.3.peg.575"/>
<dbReference type="eggNOG" id="COG0101">
    <property type="taxonomic scope" value="Bacteria"/>
</dbReference>
<dbReference type="HOGENOM" id="CLU_014673_0_2_5"/>
<dbReference type="Proteomes" id="UP000007307">
    <property type="component" value="Chromosome"/>
</dbReference>
<dbReference type="GO" id="GO:0003723">
    <property type="term" value="F:RNA binding"/>
    <property type="evidence" value="ECO:0007669"/>
    <property type="project" value="InterPro"/>
</dbReference>
<dbReference type="GO" id="GO:0160147">
    <property type="term" value="F:tRNA pseudouridine(38-40) synthase activity"/>
    <property type="evidence" value="ECO:0007669"/>
    <property type="project" value="UniProtKB-EC"/>
</dbReference>
<dbReference type="GO" id="GO:0031119">
    <property type="term" value="P:tRNA pseudouridine synthesis"/>
    <property type="evidence" value="ECO:0007669"/>
    <property type="project" value="UniProtKB-UniRule"/>
</dbReference>
<dbReference type="CDD" id="cd02570">
    <property type="entry name" value="PseudoU_synth_EcTruA"/>
    <property type="match status" value="1"/>
</dbReference>
<dbReference type="FunFam" id="3.30.70.580:FF:000001">
    <property type="entry name" value="tRNA pseudouridine synthase A"/>
    <property type="match status" value="1"/>
</dbReference>
<dbReference type="Gene3D" id="3.30.70.660">
    <property type="entry name" value="Pseudouridine synthase I, catalytic domain, C-terminal subdomain"/>
    <property type="match status" value="1"/>
</dbReference>
<dbReference type="Gene3D" id="3.30.70.580">
    <property type="entry name" value="Pseudouridine synthase I, catalytic domain, N-terminal subdomain"/>
    <property type="match status" value="1"/>
</dbReference>
<dbReference type="HAMAP" id="MF_00171">
    <property type="entry name" value="TruA"/>
    <property type="match status" value="1"/>
</dbReference>
<dbReference type="InterPro" id="IPR020103">
    <property type="entry name" value="PsdUridine_synth_cat_dom_sf"/>
</dbReference>
<dbReference type="InterPro" id="IPR001406">
    <property type="entry name" value="PsdUridine_synth_TruA"/>
</dbReference>
<dbReference type="InterPro" id="IPR020097">
    <property type="entry name" value="PsdUridine_synth_TruA_a/b_dom"/>
</dbReference>
<dbReference type="InterPro" id="IPR020095">
    <property type="entry name" value="PsdUridine_synth_TruA_C"/>
</dbReference>
<dbReference type="InterPro" id="IPR020094">
    <property type="entry name" value="TruA/RsuA/RluB/E/F_N"/>
</dbReference>
<dbReference type="NCBIfam" id="TIGR00071">
    <property type="entry name" value="hisT_truA"/>
    <property type="match status" value="1"/>
</dbReference>
<dbReference type="PANTHER" id="PTHR11142">
    <property type="entry name" value="PSEUDOURIDYLATE SYNTHASE"/>
    <property type="match status" value="1"/>
</dbReference>
<dbReference type="PANTHER" id="PTHR11142:SF0">
    <property type="entry name" value="TRNA PSEUDOURIDINE SYNTHASE-LIKE 1"/>
    <property type="match status" value="1"/>
</dbReference>
<dbReference type="Pfam" id="PF01416">
    <property type="entry name" value="PseudoU_synth_1"/>
    <property type="match status" value="2"/>
</dbReference>
<dbReference type="PIRSF" id="PIRSF001430">
    <property type="entry name" value="tRNA_psdUrid_synth"/>
    <property type="match status" value="1"/>
</dbReference>
<dbReference type="SUPFAM" id="SSF55120">
    <property type="entry name" value="Pseudouridine synthase"/>
    <property type="match status" value="1"/>
</dbReference>
<comment type="function">
    <text evidence="1">Formation of pseudouridine at positions 38, 39 and 40 in the anticodon stem and loop of transfer RNAs.</text>
</comment>
<comment type="catalytic activity">
    <reaction evidence="1">
        <text>uridine(38/39/40) in tRNA = pseudouridine(38/39/40) in tRNA</text>
        <dbReference type="Rhea" id="RHEA:22376"/>
        <dbReference type="Rhea" id="RHEA-COMP:10085"/>
        <dbReference type="Rhea" id="RHEA-COMP:10087"/>
        <dbReference type="ChEBI" id="CHEBI:65314"/>
        <dbReference type="ChEBI" id="CHEBI:65315"/>
        <dbReference type="EC" id="5.4.99.12"/>
    </reaction>
</comment>
<comment type="subunit">
    <text evidence="1">Homodimer.</text>
</comment>
<comment type="similarity">
    <text evidence="1">Belongs to the tRNA pseudouridine synthase TruA family.</text>
</comment>
<reference key="1">
    <citation type="journal article" date="2009" name="BMC Genomics">
        <title>Conservation in the face of diversity: multistrain analysis of an intracellular bacterium.</title>
        <authorList>
            <person name="Dark M.J."/>
            <person name="Herndon D.R."/>
            <person name="Kappmeyer L.S."/>
            <person name="Gonzales M.P."/>
            <person name="Nordeen E."/>
            <person name="Palmer G.H."/>
            <person name="Knowles D.P. Jr."/>
            <person name="Brayton K.A."/>
        </authorList>
    </citation>
    <scope>NUCLEOTIDE SEQUENCE [LARGE SCALE GENOMIC DNA]</scope>
    <source>
        <strain>Florida</strain>
    </source>
</reference>
<sequence>MRYRAVVEYDGTAFIGWQRQKGVAGRSVQESIEDAIYRLSQQHVTVFAAGRTDAGVHALGQVVHFDLNTSLQDYVIKNALNHYLRSDMVSILSLEEAAEGFHARFSAKKRHYMYKIVNRDAPPCLDRLRMWHVPKQLNVSDMQEAASHMVGEKKDFASFRAKECQSKSSVRTVDRIDCVREGNNIFVHVSAKSFLHKQVRIIVGTLVQCGHGAFPPSYVLEILERKNRAAAGITAPPHGLYLVLVEY</sequence>
<evidence type="ECO:0000255" key="1">
    <source>
        <dbReference type="HAMAP-Rule" id="MF_00171"/>
    </source>
</evidence>